<proteinExistence type="evidence at transcript level"/>
<protein>
    <recommendedName>
        <fullName evidence="1">Malate synthase</fullName>
        <ecNumber evidence="1">2.3.3.9</ecNumber>
    </recommendedName>
</protein>
<comment type="catalytic activity">
    <reaction evidence="1">
        <text>glyoxylate + acetyl-CoA + H2O = (S)-malate + CoA + H(+)</text>
        <dbReference type="Rhea" id="RHEA:18181"/>
        <dbReference type="ChEBI" id="CHEBI:15377"/>
        <dbReference type="ChEBI" id="CHEBI:15378"/>
        <dbReference type="ChEBI" id="CHEBI:15589"/>
        <dbReference type="ChEBI" id="CHEBI:36655"/>
        <dbReference type="ChEBI" id="CHEBI:57287"/>
        <dbReference type="ChEBI" id="CHEBI:57288"/>
        <dbReference type="EC" id="2.3.3.9"/>
    </reaction>
</comment>
<comment type="pathway">
    <text evidence="1">Carbohydrate metabolism; glyoxylate cycle; (S)-malate from isocitrate: step 2/2.</text>
</comment>
<comment type="subcellular location">
    <subcellularLocation>
        <location evidence="4">Glyoxysome</location>
    </subcellularLocation>
</comment>
<comment type="induction">
    <text evidence="2">By submergence in seedlings.</text>
</comment>
<comment type="similarity">
    <text evidence="1">Belongs to the malate synthase family.</text>
</comment>
<comment type="sequence caution" evidence="4">
    <conflict type="erroneous gene model prediction">
        <sequence resource="EMBL-CDS" id="BAH92721"/>
    </conflict>
</comment>
<evidence type="ECO:0000255" key="1">
    <source>
        <dbReference type="RuleBase" id="RU000555"/>
    </source>
</evidence>
<evidence type="ECO:0000269" key="2">
    <source>
    </source>
</evidence>
<evidence type="ECO:0000303" key="3">
    <source>
    </source>
</evidence>
<evidence type="ECO:0000305" key="4"/>
<evidence type="ECO:0000312" key="5">
    <source>
        <dbReference type="EMBL" id="BAH92721.1"/>
    </source>
</evidence>
<evidence type="ECO:0000312" key="6">
    <source>
        <dbReference type="EMBL" id="CAD41322.1"/>
    </source>
</evidence>
<dbReference type="EC" id="2.3.3.9" evidence="1"/>
<dbReference type="EMBL" id="AL662946">
    <property type="protein sequence ID" value="CAD41322.1"/>
    <property type="molecule type" value="Genomic_DNA"/>
</dbReference>
<dbReference type="EMBL" id="AP008210">
    <property type="protein sequence ID" value="BAH92721.1"/>
    <property type="status" value="ALT_SEQ"/>
    <property type="molecule type" value="Genomic_DNA"/>
</dbReference>
<dbReference type="EMBL" id="AP014960">
    <property type="protein sequence ID" value="BAS89802.1"/>
    <property type="molecule type" value="Genomic_DNA"/>
</dbReference>
<dbReference type="EMBL" id="AK241214">
    <property type="protein sequence ID" value="BAH00981.1"/>
    <property type="molecule type" value="mRNA"/>
</dbReference>
<dbReference type="RefSeq" id="XP_015635902.1">
    <property type="nucleotide sequence ID" value="XM_015780416.1"/>
</dbReference>
<dbReference type="SMR" id="Q7XUG1"/>
<dbReference type="FunCoup" id="Q7XUG1">
    <property type="interactions" value="323"/>
</dbReference>
<dbReference type="STRING" id="39947.Q7XUG1"/>
<dbReference type="PaxDb" id="39947-Q7XUG1"/>
<dbReference type="EnsemblPlants" id="Os04t0486950-01">
    <property type="protein sequence ID" value="Os04t0486950-01"/>
    <property type="gene ID" value="Os04g0486950"/>
</dbReference>
<dbReference type="Gramene" id="Os04t0486950-01">
    <property type="protein sequence ID" value="Os04t0486950-01"/>
    <property type="gene ID" value="Os04g0486950"/>
</dbReference>
<dbReference type="KEGG" id="dosa:Os04g0486950"/>
<dbReference type="eggNOG" id="KOG1261">
    <property type="taxonomic scope" value="Eukaryota"/>
</dbReference>
<dbReference type="HOGENOM" id="CLU_018928_3_0_1"/>
<dbReference type="InParanoid" id="Q7XUG1"/>
<dbReference type="OMA" id="WHLPERH"/>
<dbReference type="OrthoDB" id="4078635at2759"/>
<dbReference type="UniPathway" id="UPA00703">
    <property type="reaction ID" value="UER00720"/>
</dbReference>
<dbReference type="Proteomes" id="UP000000763">
    <property type="component" value="Chromosome 4"/>
</dbReference>
<dbReference type="Proteomes" id="UP000059680">
    <property type="component" value="Chromosome 4"/>
</dbReference>
<dbReference type="GO" id="GO:0005737">
    <property type="term" value="C:cytoplasm"/>
    <property type="evidence" value="ECO:0000318"/>
    <property type="project" value="GO_Central"/>
</dbReference>
<dbReference type="GO" id="GO:0009514">
    <property type="term" value="C:glyoxysome"/>
    <property type="evidence" value="ECO:0007669"/>
    <property type="project" value="UniProtKB-SubCell"/>
</dbReference>
<dbReference type="GO" id="GO:0004474">
    <property type="term" value="F:malate synthase activity"/>
    <property type="evidence" value="ECO:0000318"/>
    <property type="project" value="GO_Central"/>
</dbReference>
<dbReference type="GO" id="GO:0006097">
    <property type="term" value="P:glyoxylate cycle"/>
    <property type="evidence" value="ECO:0000318"/>
    <property type="project" value="GO_Central"/>
</dbReference>
<dbReference type="GO" id="GO:0006099">
    <property type="term" value="P:tricarboxylic acid cycle"/>
    <property type="evidence" value="ECO:0007669"/>
    <property type="project" value="UniProtKB-KW"/>
</dbReference>
<dbReference type="CDD" id="cd00727">
    <property type="entry name" value="malate_synt_A"/>
    <property type="match status" value="1"/>
</dbReference>
<dbReference type="FunFam" id="1.20.1220.12:FF:000001">
    <property type="entry name" value="Malate synthase"/>
    <property type="match status" value="1"/>
</dbReference>
<dbReference type="FunFam" id="3.20.20.360:FF:000001">
    <property type="entry name" value="Malate synthase"/>
    <property type="match status" value="1"/>
</dbReference>
<dbReference type="Gene3D" id="3.20.20.360">
    <property type="entry name" value="Malate synthase, domain 3"/>
    <property type="match status" value="1"/>
</dbReference>
<dbReference type="Gene3D" id="1.20.1220.12">
    <property type="entry name" value="Malate synthase, domain III"/>
    <property type="match status" value="1"/>
</dbReference>
<dbReference type="InterPro" id="IPR044856">
    <property type="entry name" value="Malate_synth_C_sf"/>
</dbReference>
<dbReference type="InterPro" id="IPR011076">
    <property type="entry name" value="Malate_synth_sf"/>
</dbReference>
<dbReference type="InterPro" id="IPR006252">
    <property type="entry name" value="Malate_synthA"/>
</dbReference>
<dbReference type="InterPro" id="IPR019830">
    <property type="entry name" value="Malate_synthase_CS"/>
</dbReference>
<dbReference type="InterPro" id="IPR001465">
    <property type="entry name" value="Malate_synthase_TIM"/>
</dbReference>
<dbReference type="InterPro" id="IPR048355">
    <property type="entry name" value="MS_C"/>
</dbReference>
<dbReference type="InterPro" id="IPR048356">
    <property type="entry name" value="MS_N"/>
</dbReference>
<dbReference type="InterPro" id="IPR046363">
    <property type="entry name" value="MS_N_TIM-barrel_dom"/>
</dbReference>
<dbReference type="NCBIfam" id="TIGR01344">
    <property type="entry name" value="malate_syn_A"/>
    <property type="match status" value="1"/>
</dbReference>
<dbReference type="PANTHER" id="PTHR42902">
    <property type="entry name" value="MALATE SYNTHASE"/>
    <property type="match status" value="1"/>
</dbReference>
<dbReference type="PANTHER" id="PTHR42902:SF1">
    <property type="entry name" value="MALATE SYNTHASE 1-RELATED"/>
    <property type="match status" value="1"/>
</dbReference>
<dbReference type="Pfam" id="PF20659">
    <property type="entry name" value="MS_C"/>
    <property type="match status" value="1"/>
</dbReference>
<dbReference type="Pfam" id="PF20656">
    <property type="entry name" value="MS_N"/>
    <property type="match status" value="1"/>
</dbReference>
<dbReference type="Pfam" id="PF01274">
    <property type="entry name" value="MS_TIM-barrel"/>
    <property type="match status" value="1"/>
</dbReference>
<dbReference type="PIRSF" id="PIRSF001363">
    <property type="entry name" value="Malate_synth"/>
    <property type="match status" value="1"/>
</dbReference>
<dbReference type="SUPFAM" id="SSF51645">
    <property type="entry name" value="Malate synthase G"/>
    <property type="match status" value="1"/>
</dbReference>
<dbReference type="PROSITE" id="PS00510">
    <property type="entry name" value="MALATE_SYNTHASE"/>
    <property type="match status" value="1"/>
</dbReference>
<name>MASY_ORYSJ</name>
<feature type="chain" id="PRO_0000430877" description="Malate synthase">
    <location>
        <begin position="1"/>
        <end position="567"/>
    </location>
</feature>
<feature type="short sequence motif" description="Microbody targeting signal" evidence="4">
    <location>
        <begin position="565"/>
        <end position="567"/>
    </location>
</feature>
<feature type="active site" description="Proton acceptor" evidence="4">
    <location>
        <position position="177"/>
    </location>
</feature>
<feature type="active site" description="Proton donor" evidence="4">
    <location>
        <position position="466"/>
    </location>
</feature>
<reference key="1">
    <citation type="journal article" date="2002" name="Nature">
        <title>Sequence and analysis of rice chromosome 4.</title>
        <authorList>
            <person name="Feng Q."/>
            <person name="Zhang Y."/>
            <person name="Hao P."/>
            <person name="Wang S."/>
            <person name="Fu G."/>
            <person name="Huang Y."/>
            <person name="Li Y."/>
            <person name="Zhu J."/>
            <person name="Liu Y."/>
            <person name="Hu X."/>
            <person name="Jia P."/>
            <person name="Zhang Y."/>
            <person name="Zhao Q."/>
            <person name="Ying K."/>
            <person name="Yu S."/>
            <person name="Tang Y."/>
            <person name="Weng Q."/>
            <person name="Zhang L."/>
            <person name="Lu Y."/>
            <person name="Mu J."/>
            <person name="Lu Y."/>
            <person name="Zhang L.S."/>
            <person name="Yu Z."/>
            <person name="Fan D."/>
            <person name="Liu X."/>
            <person name="Lu T."/>
            <person name="Li C."/>
            <person name="Wu Y."/>
            <person name="Sun T."/>
            <person name="Lei H."/>
            <person name="Li T."/>
            <person name="Hu H."/>
            <person name="Guan J."/>
            <person name="Wu M."/>
            <person name="Zhang R."/>
            <person name="Zhou B."/>
            <person name="Chen Z."/>
            <person name="Chen L."/>
            <person name="Jin Z."/>
            <person name="Wang R."/>
            <person name="Yin H."/>
            <person name="Cai Z."/>
            <person name="Ren S."/>
            <person name="Lv G."/>
            <person name="Gu W."/>
            <person name="Zhu G."/>
            <person name="Tu Y."/>
            <person name="Jia J."/>
            <person name="Zhang Y."/>
            <person name="Chen J."/>
            <person name="Kang H."/>
            <person name="Chen X."/>
            <person name="Shao C."/>
            <person name="Sun Y."/>
            <person name="Hu Q."/>
            <person name="Zhang X."/>
            <person name="Zhang W."/>
            <person name="Wang L."/>
            <person name="Ding C."/>
            <person name="Sheng H."/>
            <person name="Gu J."/>
            <person name="Chen S."/>
            <person name="Ni L."/>
            <person name="Zhu F."/>
            <person name="Chen W."/>
            <person name="Lan L."/>
            <person name="Lai Y."/>
            <person name="Cheng Z."/>
            <person name="Gu M."/>
            <person name="Jiang J."/>
            <person name="Li J."/>
            <person name="Hong G."/>
            <person name="Xue Y."/>
            <person name="Han B."/>
        </authorList>
    </citation>
    <scope>NUCLEOTIDE SEQUENCE [LARGE SCALE GENOMIC DNA]</scope>
    <source>
        <strain>cv. Nipponbare</strain>
    </source>
</reference>
<reference key="2">
    <citation type="journal article" date="2005" name="Nature">
        <title>The map-based sequence of the rice genome.</title>
        <authorList>
            <consortium name="International rice genome sequencing project (IRGSP)"/>
        </authorList>
    </citation>
    <scope>NUCLEOTIDE SEQUENCE [LARGE SCALE GENOMIC DNA]</scope>
    <source>
        <strain>cv. Nipponbare</strain>
    </source>
</reference>
<reference key="3">
    <citation type="journal article" date="2008" name="Nucleic Acids Res.">
        <title>The rice annotation project database (RAP-DB): 2008 update.</title>
        <authorList>
            <consortium name="The rice annotation project (RAP)"/>
        </authorList>
    </citation>
    <scope>GENOME REANNOTATION</scope>
    <source>
        <strain>cv. Nipponbare</strain>
    </source>
</reference>
<reference key="4">
    <citation type="journal article" date="2013" name="Rice">
        <title>Improvement of the Oryza sativa Nipponbare reference genome using next generation sequence and optical map data.</title>
        <authorList>
            <person name="Kawahara Y."/>
            <person name="de la Bastide M."/>
            <person name="Hamilton J.P."/>
            <person name="Kanamori H."/>
            <person name="McCombie W.R."/>
            <person name="Ouyang S."/>
            <person name="Schwartz D.C."/>
            <person name="Tanaka T."/>
            <person name="Wu J."/>
            <person name="Zhou S."/>
            <person name="Childs K.L."/>
            <person name="Davidson R.M."/>
            <person name="Lin H."/>
            <person name="Quesada-Ocampo L."/>
            <person name="Vaillancourt B."/>
            <person name="Sakai H."/>
            <person name="Lee S.S."/>
            <person name="Kim J."/>
            <person name="Numa H."/>
            <person name="Itoh T."/>
            <person name="Buell C.R."/>
            <person name="Matsumoto T."/>
        </authorList>
    </citation>
    <scope>GENOME REANNOTATION</scope>
    <source>
        <strain>cv. Nipponbare</strain>
    </source>
</reference>
<reference key="5">
    <citation type="submission" date="2006-10" db="EMBL/GenBank/DDBJ databases">
        <title>Oryza sativa full length cDNA.</title>
        <authorList>
            <consortium name="The rice full-length cDNA consortium"/>
        </authorList>
    </citation>
    <scope>NUCLEOTIDE SEQUENCE [LARGE SCALE MRNA]</scope>
    <source>
        <strain>cv. Nipponbare</strain>
    </source>
</reference>
<reference key="6">
    <citation type="journal article" date="2005" name="Acta Biochim. Biophys. Sin.">
        <title>Anaerobic induction of isocitrate lyase and malate synthase in submerged rice seedlings indicates the important metabolic role of the glyoxylate cycle.</title>
        <authorList>
            <person name="Lu Y."/>
            <person name="Wu Y.R."/>
            <person name="Han B."/>
        </authorList>
    </citation>
    <scope>INDUCTION BY SUBMERGENCE</scope>
</reference>
<accession>Q7XUG1</accession>
<accession>A0A0P0WBN8</accession>
<accession>C7J1P7</accession>
<gene>
    <name evidence="3" type="primary">MS</name>
    <name evidence="5" type="ordered locus">Os04g0486950</name>
    <name evidence="4" type="ordered locus">LOC_Os04g40990</name>
    <name evidence="6" type="ORF">OJ991113_30.4</name>
</gene>
<organism>
    <name type="scientific">Oryza sativa subsp. japonica</name>
    <name type="common">Rice</name>
    <dbReference type="NCBI Taxonomy" id="39947"/>
    <lineage>
        <taxon>Eukaryota</taxon>
        <taxon>Viridiplantae</taxon>
        <taxon>Streptophyta</taxon>
        <taxon>Embryophyta</taxon>
        <taxon>Tracheophyta</taxon>
        <taxon>Spermatophyta</taxon>
        <taxon>Magnoliopsida</taxon>
        <taxon>Liliopsida</taxon>
        <taxon>Poales</taxon>
        <taxon>Poaceae</taxon>
        <taxon>BOP clade</taxon>
        <taxon>Oryzoideae</taxon>
        <taxon>Oryzeae</taxon>
        <taxon>Oryzinae</taxon>
        <taxon>Oryza</taxon>
        <taxon>Oryza sativa</taxon>
    </lineage>
</organism>
<keyword id="KW-0329">Glyoxylate bypass</keyword>
<keyword id="KW-0330">Glyoxysome</keyword>
<keyword id="KW-0576">Peroxisome</keyword>
<keyword id="KW-1185">Reference proteome</keyword>
<keyword id="KW-0808">Transferase</keyword>
<keyword id="KW-0816">Tricarboxylic acid cycle</keyword>
<sequence length="567" mass="62639">MATNAAAPPCPCYDTPEGVDILGRYDPEFAAILTRDSLAFVAGLQREFRGAVRYAMERRREAQRRYDAGELPRFDPATRPVREAGGWACAPVPPAIADRTVEITGPAEPRKMVINALNSGAKVFMADFEDALSPTWENLMRGQVNLRDAVAGTITYRDAARGREYRLGDRPATLFVRPRGWHLPEAHVLVDGEPAIGCLVDFGLYFFHSHAAFRSGQGADFGPFFYLPKMEHSREARIWKGVFERAEKEAGIGRGSIRATVLVETLPAVFQMEEILHELRDHSAGLNCGRWDYIFSYVKTFRARPDRLLPDRALVGMAQHFMRSYSHLLIQTCHRRGVHAMGGMAAQIPIKDDAAANEAALELVRKDKLREVRAGHDGTWAAHPGLIPAIREVFEGHLGGRPNQIDAAAGDAARAGVAVTEEDLLQPPRGARTVEGLRHNTRVGVQYVAAWLSGSGSVPLYNLMEDAATAEISRVQNWQWLRHGAVLDAGGVEVRATPELLARVVEVEMARVEAEVGAERFRRGRYAEAGRIFSRQCTAPELDDFLTLDAYNLIVVHHPGASSPCKL</sequence>